<gene>
    <name evidence="2" type="primary">adk</name>
    <name type="ordered locus">SF0419</name>
    <name type="ordered locus">S0426</name>
</gene>
<keyword id="KW-0007">Acetylation</keyword>
<keyword id="KW-0067">ATP-binding</keyword>
<keyword id="KW-0963">Cytoplasm</keyword>
<keyword id="KW-0418">Kinase</keyword>
<keyword id="KW-0545">Nucleotide biosynthesis</keyword>
<keyword id="KW-0547">Nucleotide-binding</keyword>
<keyword id="KW-1185">Reference proteome</keyword>
<keyword id="KW-0808">Transferase</keyword>
<proteinExistence type="inferred from homology"/>
<feature type="chain" id="PRO_1000058907" description="Adenylate kinase">
    <location>
        <begin position="1"/>
        <end position="214"/>
    </location>
</feature>
<feature type="region of interest" description="NMP" evidence="2">
    <location>
        <begin position="30"/>
        <end position="59"/>
    </location>
</feature>
<feature type="region of interest" description="LID">
    <location>
        <begin position="122"/>
        <end position="159"/>
    </location>
</feature>
<feature type="binding site" evidence="2">
    <location>
        <begin position="10"/>
        <end position="15"/>
    </location>
    <ligand>
        <name>ATP</name>
        <dbReference type="ChEBI" id="CHEBI:30616"/>
    </ligand>
</feature>
<feature type="binding site" evidence="2">
    <location>
        <position position="31"/>
    </location>
    <ligand>
        <name>AMP</name>
        <dbReference type="ChEBI" id="CHEBI:456215"/>
    </ligand>
</feature>
<feature type="binding site" evidence="2">
    <location>
        <position position="36"/>
    </location>
    <ligand>
        <name>AMP</name>
        <dbReference type="ChEBI" id="CHEBI:456215"/>
    </ligand>
</feature>
<feature type="binding site" evidence="2">
    <location>
        <begin position="57"/>
        <end position="59"/>
    </location>
    <ligand>
        <name>AMP</name>
        <dbReference type="ChEBI" id="CHEBI:456215"/>
    </ligand>
</feature>
<feature type="binding site" evidence="2">
    <location>
        <begin position="85"/>
        <end position="88"/>
    </location>
    <ligand>
        <name>AMP</name>
        <dbReference type="ChEBI" id="CHEBI:456215"/>
    </ligand>
</feature>
<feature type="binding site" evidence="2">
    <location>
        <position position="92"/>
    </location>
    <ligand>
        <name>AMP</name>
        <dbReference type="ChEBI" id="CHEBI:456215"/>
    </ligand>
</feature>
<feature type="binding site" evidence="2">
    <location>
        <position position="123"/>
    </location>
    <ligand>
        <name>ATP</name>
        <dbReference type="ChEBI" id="CHEBI:30616"/>
    </ligand>
</feature>
<feature type="binding site" evidence="2">
    <location>
        <begin position="132"/>
        <end position="133"/>
    </location>
    <ligand>
        <name>ATP</name>
        <dbReference type="ChEBI" id="CHEBI:30616"/>
    </ligand>
</feature>
<feature type="binding site" evidence="2">
    <location>
        <position position="156"/>
    </location>
    <ligand>
        <name>AMP</name>
        <dbReference type="ChEBI" id="CHEBI:456215"/>
    </ligand>
</feature>
<feature type="binding site" evidence="2">
    <location>
        <position position="167"/>
    </location>
    <ligand>
        <name>AMP</name>
        <dbReference type="ChEBI" id="CHEBI:456215"/>
    </ligand>
</feature>
<feature type="binding site" evidence="2">
    <location>
        <position position="200"/>
    </location>
    <ligand>
        <name>ATP</name>
        <dbReference type="ChEBI" id="CHEBI:30616"/>
    </ligand>
</feature>
<feature type="modified residue" description="N6-acetyllysine" evidence="1">
    <location>
        <position position="192"/>
    </location>
</feature>
<organism>
    <name type="scientific">Shigella flexneri</name>
    <dbReference type="NCBI Taxonomy" id="623"/>
    <lineage>
        <taxon>Bacteria</taxon>
        <taxon>Pseudomonadati</taxon>
        <taxon>Pseudomonadota</taxon>
        <taxon>Gammaproteobacteria</taxon>
        <taxon>Enterobacterales</taxon>
        <taxon>Enterobacteriaceae</taxon>
        <taxon>Shigella</taxon>
    </lineage>
</organism>
<dbReference type="EC" id="2.7.4.3" evidence="2"/>
<dbReference type="EMBL" id="AE005674">
    <property type="protein sequence ID" value="AAN42074.2"/>
    <property type="molecule type" value="Genomic_DNA"/>
</dbReference>
<dbReference type="EMBL" id="AE014073">
    <property type="protein sequence ID" value="AAP15951.1"/>
    <property type="molecule type" value="Genomic_DNA"/>
</dbReference>
<dbReference type="RefSeq" id="NP_706367.2">
    <property type="nucleotide sequence ID" value="NC_004337.2"/>
</dbReference>
<dbReference type="RefSeq" id="WP_001220235.1">
    <property type="nucleotide sequence ID" value="NZ_WPGW01000015.1"/>
</dbReference>
<dbReference type="SMR" id="Q83M40"/>
<dbReference type="STRING" id="198214.SF0419"/>
<dbReference type="PaxDb" id="198214-SF0419"/>
<dbReference type="GeneID" id="1027707"/>
<dbReference type="KEGG" id="sfl:SF0419"/>
<dbReference type="KEGG" id="sfx:S0426"/>
<dbReference type="PATRIC" id="fig|198214.7.peg.481"/>
<dbReference type="HOGENOM" id="CLU_032354_1_2_6"/>
<dbReference type="UniPathway" id="UPA00588">
    <property type="reaction ID" value="UER00649"/>
</dbReference>
<dbReference type="Proteomes" id="UP000001006">
    <property type="component" value="Chromosome"/>
</dbReference>
<dbReference type="Proteomes" id="UP000002673">
    <property type="component" value="Chromosome"/>
</dbReference>
<dbReference type="GO" id="GO:0005737">
    <property type="term" value="C:cytoplasm"/>
    <property type="evidence" value="ECO:0007669"/>
    <property type="project" value="UniProtKB-SubCell"/>
</dbReference>
<dbReference type="GO" id="GO:0004017">
    <property type="term" value="F:adenylate kinase activity"/>
    <property type="evidence" value="ECO:0007669"/>
    <property type="project" value="UniProtKB-UniRule"/>
</dbReference>
<dbReference type="GO" id="GO:0005524">
    <property type="term" value="F:ATP binding"/>
    <property type="evidence" value="ECO:0007669"/>
    <property type="project" value="UniProtKB-UniRule"/>
</dbReference>
<dbReference type="GO" id="GO:0044209">
    <property type="term" value="P:AMP salvage"/>
    <property type="evidence" value="ECO:0007669"/>
    <property type="project" value="UniProtKB-UniRule"/>
</dbReference>
<dbReference type="CDD" id="cd01428">
    <property type="entry name" value="ADK"/>
    <property type="match status" value="1"/>
</dbReference>
<dbReference type="FunFam" id="3.40.50.300:FF:000106">
    <property type="entry name" value="Adenylate kinase mitochondrial"/>
    <property type="match status" value="1"/>
</dbReference>
<dbReference type="Gene3D" id="3.40.50.300">
    <property type="entry name" value="P-loop containing nucleotide triphosphate hydrolases"/>
    <property type="match status" value="1"/>
</dbReference>
<dbReference type="HAMAP" id="MF_00235">
    <property type="entry name" value="Adenylate_kinase_Adk"/>
    <property type="match status" value="1"/>
</dbReference>
<dbReference type="InterPro" id="IPR006259">
    <property type="entry name" value="Adenyl_kin_sub"/>
</dbReference>
<dbReference type="InterPro" id="IPR000850">
    <property type="entry name" value="Adenylat/UMP-CMP_kin"/>
</dbReference>
<dbReference type="InterPro" id="IPR033690">
    <property type="entry name" value="Adenylat_kinase_CS"/>
</dbReference>
<dbReference type="InterPro" id="IPR007862">
    <property type="entry name" value="Adenylate_kinase_lid-dom"/>
</dbReference>
<dbReference type="InterPro" id="IPR027417">
    <property type="entry name" value="P-loop_NTPase"/>
</dbReference>
<dbReference type="NCBIfam" id="TIGR01351">
    <property type="entry name" value="adk"/>
    <property type="match status" value="1"/>
</dbReference>
<dbReference type="NCBIfam" id="NF001379">
    <property type="entry name" value="PRK00279.1-1"/>
    <property type="match status" value="1"/>
</dbReference>
<dbReference type="NCBIfam" id="NF001380">
    <property type="entry name" value="PRK00279.1-2"/>
    <property type="match status" value="1"/>
</dbReference>
<dbReference type="NCBIfam" id="NF001381">
    <property type="entry name" value="PRK00279.1-3"/>
    <property type="match status" value="1"/>
</dbReference>
<dbReference type="NCBIfam" id="NF011100">
    <property type="entry name" value="PRK14527.1"/>
    <property type="match status" value="1"/>
</dbReference>
<dbReference type="PANTHER" id="PTHR23359">
    <property type="entry name" value="NUCLEOTIDE KINASE"/>
    <property type="match status" value="1"/>
</dbReference>
<dbReference type="Pfam" id="PF00406">
    <property type="entry name" value="ADK"/>
    <property type="match status" value="1"/>
</dbReference>
<dbReference type="Pfam" id="PF05191">
    <property type="entry name" value="ADK_lid"/>
    <property type="match status" value="1"/>
</dbReference>
<dbReference type="PRINTS" id="PR00094">
    <property type="entry name" value="ADENYLTKNASE"/>
</dbReference>
<dbReference type="SUPFAM" id="SSF52540">
    <property type="entry name" value="P-loop containing nucleoside triphosphate hydrolases"/>
    <property type="match status" value="1"/>
</dbReference>
<dbReference type="PROSITE" id="PS00113">
    <property type="entry name" value="ADENYLATE_KINASE"/>
    <property type="match status" value="1"/>
</dbReference>
<sequence length="214" mass="23617">MRIILLGAPGAGKGTQAQFIMEKYGIPQISTGDMLRAAVKSGSELGKQAKDIMDAGKLVTDELVIALVKERIAQEDCRNGFLLDGFPRTIPQADAMKEAGINVDYVLEFDVPDELIVDRIVGRRVHAPSGRVYHVKFNPPKVEGKDDVTGEELTTRKDDQEETVRKRLVEYHQMTAPLIGYYSKEAEAGNTKYAKVDGTKQVAEVRADLEKILG</sequence>
<accession>Q83M40</accession>
<accession>Q7UDH6</accession>
<name>KAD_SHIFL</name>
<comment type="function">
    <text evidence="2">Catalyzes the reversible transfer of the terminal phosphate group between ATP and AMP. Plays an important role in cellular energy homeostasis and in adenine nucleotide metabolism.</text>
</comment>
<comment type="catalytic activity">
    <reaction evidence="2">
        <text>AMP + ATP = 2 ADP</text>
        <dbReference type="Rhea" id="RHEA:12973"/>
        <dbReference type="ChEBI" id="CHEBI:30616"/>
        <dbReference type="ChEBI" id="CHEBI:456215"/>
        <dbReference type="ChEBI" id="CHEBI:456216"/>
        <dbReference type="EC" id="2.7.4.3"/>
    </reaction>
</comment>
<comment type="pathway">
    <text evidence="2">Purine metabolism; AMP biosynthesis via salvage pathway; AMP from ADP: step 1/1.</text>
</comment>
<comment type="subunit">
    <text evidence="2">Monomer.</text>
</comment>
<comment type="subcellular location">
    <subcellularLocation>
        <location evidence="2">Cytoplasm</location>
    </subcellularLocation>
</comment>
<comment type="domain">
    <text evidence="2">Consists of three domains, a large central CORE domain and two small peripheral domains, NMPbind and LID, which undergo movements during catalysis. The LID domain closes over the site of phosphoryl transfer upon ATP binding. Assembling and dissambling the active center during each catalytic cycle provides an effective means to prevent ATP hydrolysis.</text>
</comment>
<comment type="similarity">
    <text evidence="2">Belongs to the adenylate kinase family.</text>
</comment>
<protein>
    <recommendedName>
        <fullName evidence="2">Adenylate kinase</fullName>
        <shortName evidence="2">AK</shortName>
        <ecNumber evidence="2">2.7.4.3</ecNumber>
    </recommendedName>
    <alternativeName>
        <fullName evidence="2">ATP-AMP transphosphorylase</fullName>
    </alternativeName>
    <alternativeName>
        <fullName evidence="2">ATP:AMP phosphotransferase</fullName>
    </alternativeName>
    <alternativeName>
        <fullName evidence="2">Adenylate monophosphate kinase</fullName>
    </alternativeName>
</protein>
<reference key="1">
    <citation type="journal article" date="2002" name="Nucleic Acids Res.">
        <title>Genome sequence of Shigella flexneri 2a: insights into pathogenicity through comparison with genomes of Escherichia coli K12 and O157.</title>
        <authorList>
            <person name="Jin Q."/>
            <person name="Yuan Z."/>
            <person name="Xu J."/>
            <person name="Wang Y."/>
            <person name="Shen Y."/>
            <person name="Lu W."/>
            <person name="Wang J."/>
            <person name="Liu H."/>
            <person name="Yang J."/>
            <person name="Yang F."/>
            <person name="Zhang X."/>
            <person name="Zhang J."/>
            <person name="Yang G."/>
            <person name="Wu H."/>
            <person name="Qu D."/>
            <person name="Dong J."/>
            <person name="Sun L."/>
            <person name="Xue Y."/>
            <person name="Zhao A."/>
            <person name="Gao Y."/>
            <person name="Zhu J."/>
            <person name="Kan B."/>
            <person name="Ding K."/>
            <person name="Chen S."/>
            <person name="Cheng H."/>
            <person name="Yao Z."/>
            <person name="He B."/>
            <person name="Chen R."/>
            <person name="Ma D."/>
            <person name="Qiang B."/>
            <person name="Wen Y."/>
            <person name="Hou Y."/>
            <person name="Yu J."/>
        </authorList>
    </citation>
    <scope>NUCLEOTIDE SEQUENCE [LARGE SCALE GENOMIC DNA]</scope>
    <source>
        <strain>301 / Serotype 2a</strain>
    </source>
</reference>
<reference key="2">
    <citation type="journal article" date="2003" name="Infect. Immun.">
        <title>Complete genome sequence and comparative genomics of Shigella flexneri serotype 2a strain 2457T.</title>
        <authorList>
            <person name="Wei J."/>
            <person name="Goldberg M.B."/>
            <person name="Burland V."/>
            <person name="Venkatesan M.M."/>
            <person name="Deng W."/>
            <person name="Fournier G."/>
            <person name="Mayhew G.F."/>
            <person name="Plunkett G. III"/>
            <person name="Rose D.J."/>
            <person name="Darling A."/>
            <person name="Mau B."/>
            <person name="Perna N.T."/>
            <person name="Payne S.M."/>
            <person name="Runyen-Janecky L.J."/>
            <person name="Zhou S."/>
            <person name="Schwartz D.C."/>
            <person name="Blattner F.R."/>
        </authorList>
    </citation>
    <scope>NUCLEOTIDE SEQUENCE [LARGE SCALE GENOMIC DNA]</scope>
    <source>
        <strain>ATCC 700930 / 2457T / Serotype 2a</strain>
    </source>
</reference>
<evidence type="ECO:0000250" key="1"/>
<evidence type="ECO:0000255" key="2">
    <source>
        <dbReference type="HAMAP-Rule" id="MF_00235"/>
    </source>
</evidence>